<feature type="transit peptide" description="Chloroplast" evidence="1">
    <location>
        <begin position="1"/>
        <end position="92"/>
    </location>
</feature>
<feature type="chain" id="PRO_0000415425" description="Heat shock 70 kDa protein 6, chloroplastic">
    <location>
        <begin position="93"/>
        <end position="718"/>
    </location>
</feature>
<feature type="region of interest" description="Disordered" evidence="2">
    <location>
        <begin position="671"/>
        <end position="718"/>
    </location>
</feature>
<feature type="compositionally biased region" description="Gly residues" evidence="2">
    <location>
        <begin position="678"/>
        <end position="693"/>
    </location>
</feature>
<feature type="compositionally biased region" description="Acidic residues" evidence="2">
    <location>
        <begin position="706"/>
        <end position="718"/>
    </location>
</feature>
<gene>
    <name type="primary">HSP70-6</name>
    <name type="synonym">CPHSC70-1</name>
    <name type="ordered locus">At4g24280</name>
    <name type="ORF">T22A6.110</name>
</gene>
<comment type="function">
    <text evidence="3 6 7">Acts redundantly with HSP70-7 in the thermotolerance of germinating seeds. Plays an important role in the protein precursor import into chloroplasts.</text>
</comment>
<comment type="function">
    <text evidence="8">In cooperation with other chaperones, Hsp70s are key components that facilitate folding of de novo synthesized proteins, assist translocation of precursor proteins into organelles, and are responsible for degradation of damaged protein under stress conditions.</text>
</comment>
<comment type="subunit">
    <text evidence="5">Interacts with geminivirus movement protein (MP).</text>
</comment>
<comment type="subcellular location">
    <subcellularLocation>
        <location evidence="4 7">Plastid</location>
        <location evidence="4 7">Chloroplast stroma</location>
    </subcellularLocation>
</comment>
<comment type="disruption phenotype">
    <text evidence="3 6 7">Variegated cotyledons, malformed leaves, growth retardation and impaired root growth. Defective in protein import into chloroplasts during early developmental stages.</text>
</comment>
<comment type="similarity">
    <text evidence="8">Belongs to the heat shock protein 70 (TC 1.A.33) family. DnaK subfamily.</text>
</comment>
<protein>
    <recommendedName>
        <fullName>Heat shock 70 kDa protein 6, chloroplastic</fullName>
    </recommendedName>
    <alternativeName>
        <fullName>Chloroplast heat shock protein 70-1</fullName>
        <shortName>cpHsc70-1</shortName>
    </alternativeName>
    <alternativeName>
        <fullName>Heat shock protein 70-6</fullName>
        <shortName>AtHsp70-6</shortName>
    </alternativeName>
</protein>
<dbReference type="EMBL" id="AL078637">
    <property type="protein sequence ID" value="CAB45063.1"/>
    <property type="molecule type" value="Genomic_DNA"/>
</dbReference>
<dbReference type="EMBL" id="AL161561">
    <property type="protein sequence ID" value="CAB79338.1"/>
    <property type="molecule type" value="Genomic_DNA"/>
</dbReference>
<dbReference type="EMBL" id="CP002687">
    <property type="protein sequence ID" value="AEE84884.1"/>
    <property type="molecule type" value="Genomic_DNA"/>
</dbReference>
<dbReference type="EMBL" id="AY072138">
    <property type="protein sequence ID" value="AAL59960.1"/>
    <property type="molecule type" value="mRNA"/>
</dbReference>
<dbReference type="EMBL" id="BT001950">
    <property type="protein sequence ID" value="AAN71949.1"/>
    <property type="molecule type" value="mRNA"/>
</dbReference>
<dbReference type="PIR" id="T09891">
    <property type="entry name" value="T09891"/>
</dbReference>
<dbReference type="RefSeq" id="NP_194159.1">
    <property type="nucleotide sequence ID" value="NM_118561.3"/>
</dbReference>
<dbReference type="SMR" id="Q9STW6"/>
<dbReference type="BioGRID" id="13820">
    <property type="interactions" value="25"/>
</dbReference>
<dbReference type="FunCoup" id="Q9STW6">
    <property type="interactions" value="1144"/>
</dbReference>
<dbReference type="IntAct" id="Q9STW6">
    <property type="interactions" value="1"/>
</dbReference>
<dbReference type="STRING" id="3702.Q9STW6"/>
<dbReference type="iPTMnet" id="Q9STW6"/>
<dbReference type="MetOSite" id="Q9STW6"/>
<dbReference type="PaxDb" id="3702-AT4G24280.1"/>
<dbReference type="ProteomicsDB" id="230156"/>
<dbReference type="EnsemblPlants" id="AT4G24280.1">
    <property type="protein sequence ID" value="AT4G24280.1"/>
    <property type="gene ID" value="AT4G24280"/>
</dbReference>
<dbReference type="GeneID" id="828531"/>
<dbReference type="Gramene" id="AT4G24280.1">
    <property type="protein sequence ID" value="AT4G24280.1"/>
    <property type="gene ID" value="AT4G24280"/>
</dbReference>
<dbReference type="KEGG" id="ath:AT4G24280"/>
<dbReference type="Araport" id="AT4G24280"/>
<dbReference type="TAIR" id="AT4G24280">
    <property type="gene designation" value="CPHSC70-1"/>
</dbReference>
<dbReference type="eggNOG" id="KOG0102">
    <property type="taxonomic scope" value="Eukaryota"/>
</dbReference>
<dbReference type="HOGENOM" id="CLU_005965_2_1_1"/>
<dbReference type="InParanoid" id="Q9STW6"/>
<dbReference type="OMA" id="ENAKCEL"/>
<dbReference type="PhylomeDB" id="Q9STW6"/>
<dbReference type="CD-CODE" id="4299E36E">
    <property type="entry name" value="Nucleolus"/>
</dbReference>
<dbReference type="PRO" id="PR:Q9STW6"/>
<dbReference type="Proteomes" id="UP000006548">
    <property type="component" value="Chromosome 4"/>
</dbReference>
<dbReference type="ExpressionAtlas" id="Q9STW6">
    <property type="expression patterns" value="baseline and differential"/>
</dbReference>
<dbReference type="GO" id="GO:0009507">
    <property type="term" value="C:chloroplast"/>
    <property type="evidence" value="ECO:0000314"/>
    <property type="project" value="TAIR"/>
</dbReference>
<dbReference type="GO" id="GO:0009941">
    <property type="term" value="C:chloroplast envelope"/>
    <property type="evidence" value="ECO:0007005"/>
    <property type="project" value="TAIR"/>
</dbReference>
<dbReference type="GO" id="GO:0009570">
    <property type="term" value="C:chloroplast stroma"/>
    <property type="evidence" value="ECO:0000314"/>
    <property type="project" value="TAIR"/>
</dbReference>
<dbReference type="GO" id="GO:0005829">
    <property type="term" value="C:cytosol"/>
    <property type="evidence" value="ECO:0007005"/>
    <property type="project" value="TAIR"/>
</dbReference>
<dbReference type="GO" id="GO:0005739">
    <property type="term" value="C:mitochondrion"/>
    <property type="evidence" value="ECO:0007005"/>
    <property type="project" value="TAIR"/>
</dbReference>
<dbReference type="GO" id="GO:0005634">
    <property type="term" value="C:nucleus"/>
    <property type="evidence" value="ECO:0007005"/>
    <property type="project" value="TAIR"/>
</dbReference>
<dbReference type="GO" id="GO:0009536">
    <property type="term" value="C:plastid"/>
    <property type="evidence" value="ECO:0000314"/>
    <property type="project" value="TAIR"/>
</dbReference>
<dbReference type="GO" id="GO:0009579">
    <property type="term" value="C:thylakoid"/>
    <property type="evidence" value="ECO:0007005"/>
    <property type="project" value="TAIR"/>
</dbReference>
<dbReference type="GO" id="GO:0005524">
    <property type="term" value="F:ATP binding"/>
    <property type="evidence" value="ECO:0007005"/>
    <property type="project" value="TAIR"/>
</dbReference>
<dbReference type="GO" id="GO:0140662">
    <property type="term" value="F:ATP-dependent protein folding chaperone"/>
    <property type="evidence" value="ECO:0007669"/>
    <property type="project" value="InterPro"/>
</dbReference>
<dbReference type="GO" id="GO:0051082">
    <property type="term" value="F:unfolded protein binding"/>
    <property type="evidence" value="ECO:0007669"/>
    <property type="project" value="InterPro"/>
</dbReference>
<dbReference type="GO" id="GO:0045036">
    <property type="term" value="P:protein targeting to chloroplast"/>
    <property type="evidence" value="ECO:0000315"/>
    <property type="project" value="TAIR"/>
</dbReference>
<dbReference type="GO" id="GO:0015031">
    <property type="term" value="P:protein transport"/>
    <property type="evidence" value="ECO:0007669"/>
    <property type="project" value="UniProtKB-KW"/>
</dbReference>
<dbReference type="GO" id="GO:0009408">
    <property type="term" value="P:response to heat"/>
    <property type="evidence" value="ECO:0000270"/>
    <property type="project" value="TAIR"/>
</dbReference>
<dbReference type="CDD" id="cd10234">
    <property type="entry name" value="ASKHA_NBD_HSP70_DnaK-like"/>
    <property type="match status" value="1"/>
</dbReference>
<dbReference type="FunFam" id="1.20.1270.10:FF:000001">
    <property type="entry name" value="Molecular chaperone DnaK"/>
    <property type="match status" value="1"/>
</dbReference>
<dbReference type="FunFam" id="3.30.420.40:FF:000004">
    <property type="entry name" value="Molecular chaperone DnaK"/>
    <property type="match status" value="1"/>
</dbReference>
<dbReference type="FunFam" id="3.90.640.10:FF:000003">
    <property type="entry name" value="Molecular chaperone DnaK"/>
    <property type="match status" value="1"/>
</dbReference>
<dbReference type="FunFam" id="2.60.34.10:FF:000008">
    <property type="entry name" value="Stromal 70 kDa heat shock-related protein"/>
    <property type="match status" value="1"/>
</dbReference>
<dbReference type="Gene3D" id="1.20.1270.10">
    <property type="match status" value="1"/>
</dbReference>
<dbReference type="Gene3D" id="3.30.420.40">
    <property type="match status" value="2"/>
</dbReference>
<dbReference type="Gene3D" id="3.90.640.10">
    <property type="entry name" value="Actin, Chain A, domain 4"/>
    <property type="match status" value="1"/>
</dbReference>
<dbReference type="Gene3D" id="2.60.34.10">
    <property type="entry name" value="Substrate Binding Domain Of DNAk, Chain A, domain 1"/>
    <property type="match status" value="1"/>
</dbReference>
<dbReference type="HAMAP" id="MF_00332">
    <property type="entry name" value="DnaK"/>
    <property type="match status" value="1"/>
</dbReference>
<dbReference type="InterPro" id="IPR043129">
    <property type="entry name" value="ATPase_NBD"/>
</dbReference>
<dbReference type="InterPro" id="IPR012725">
    <property type="entry name" value="Chaperone_DnaK"/>
</dbReference>
<dbReference type="InterPro" id="IPR018181">
    <property type="entry name" value="Heat_shock_70_CS"/>
</dbReference>
<dbReference type="InterPro" id="IPR029048">
    <property type="entry name" value="HSP70_C_sf"/>
</dbReference>
<dbReference type="InterPro" id="IPR029047">
    <property type="entry name" value="HSP70_peptide-bd_sf"/>
</dbReference>
<dbReference type="InterPro" id="IPR013126">
    <property type="entry name" value="Hsp_70_fam"/>
</dbReference>
<dbReference type="NCBIfam" id="NF001413">
    <property type="entry name" value="PRK00290.1"/>
    <property type="match status" value="1"/>
</dbReference>
<dbReference type="NCBIfam" id="NF003520">
    <property type="entry name" value="PRK05183.1"/>
    <property type="match status" value="1"/>
</dbReference>
<dbReference type="NCBIfam" id="TIGR02350">
    <property type="entry name" value="prok_dnaK"/>
    <property type="match status" value="1"/>
</dbReference>
<dbReference type="PANTHER" id="PTHR19375">
    <property type="entry name" value="HEAT SHOCK PROTEIN 70KDA"/>
    <property type="match status" value="1"/>
</dbReference>
<dbReference type="Pfam" id="PF00012">
    <property type="entry name" value="HSP70"/>
    <property type="match status" value="1"/>
</dbReference>
<dbReference type="PRINTS" id="PR00301">
    <property type="entry name" value="HEATSHOCK70"/>
</dbReference>
<dbReference type="SUPFAM" id="SSF53067">
    <property type="entry name" value="Actin-like ATPase domain"/>
    <property type="match status" value="2"/>
</dbReference>
<dbReference type="SUPFAM" id="SSF100934">
    <property type="entry name" value="Heat shock protein 70kD (HSP70), C-terminal subdomain"/>
    <property type="match status" value="1"/>
</dbReference>
<dbReference type="SUPFAM" id="SSF100920">
    <property type="entry name" value="Heat shock protein 70kD (HSP70), peptide-binding domain"/>
    <property type="match status" value="1"/>
</dbReference>
<dbReference type="PROSITE" id="PS00297">
    <property type="entry name" value="HSP70_1"/>
    <property type="match status" value="1"/>
</dbReference>
<dbReference type="PROSITE" id="PS00329">
    <property type="entry name" value="HSP70_2"/>
    <property type="match status" value="1"/>
</dbReference>
<dbReference type="PROSITE" id="PS01036">
    <property type="entry name" value="HSP70_3"/>
    <property type="match status" value="1"/>
</dbReference>
<organism>
    <name type="scientific">Arabidopsis thaliana</name>
    <name type="common">Mouse-ear cress</name>
    <dbReference type="NCBI Taxonomy" id="3702"/>
    <lineage>
        <taxon>Eukaryota</taxon>
        <taxon>Viridiplantae</taxon>
        <taxon>Streptophyta</taxon>
        <taxon>Embryophyta</taxon>
        <taxon>Tracheophyta</taxon>
        <taxon>Spermatophyta</taxon>
        <taxon>Magnoliopsida</taxon>
        <taxon>eudicotyledons</taxon>
        <taxon>Gunneridae</taxon>
        <taxon>Pentapetalae</taxon>
        <taxon>rosids</taxon>
        <taxon>malvids</taxon>
        <taxon>Brassicales</taxon>
        <taxon>Brassicaceae</taxon>
        <taxon>Camelineae</taxon>
        <taxon>Arabidopsis</taxon>
    </lineage>
</organism>
<accession>Q9STW6</accession>
<sequence>MASSAAQIHVLGGIGFASSSSSKRNLNGKGGTFMPRSAFFGTRTGPFSTPTSAFLRMGTRNGGGASRYAVGPVRVVNEKVVGIDLGTTNSAVAAMEGGKPTIVTNAEGQRTTPSVVAYTKSGDRLVGQIAKRQAVVNPENTFFSVKRFIGRKMNEVDEESKQVSYRVVRDENNNVKLECPAINKQFAAEEISAQVLRKLVDDASRFLNDKVTKAVITVPAYFNDSQRTATKDAGRIAGLEVLRIINEPTAASLAYGFDRKANETILVFDLGGGTFDVSVLEVGDGVFEVLSTSGDTHLGGDDFDKRVVDWLAAEFKKDEGIDLLKDKQALQRLTEAAEKAKIELSSLTQTNMSLPFITATADGPKHIETTLTRAKFEELCSDLLDRVRTPVENSLRDAKLSFKDIDEVILVGGSTRIPAVQELVRKVTGKEPNVTVNPDEVVALGAAVQAGVLAGDVSDIVLLDVTPLSIGLETLGGVMTKIIPRNTTLPTSKSEVFSTAADGQTSVEINVLQGEREFVRDNKSLGSFRLDGIPPAPRGVPQIEVKFDIDANGILSVSAVDKGTGKKQDITITGASTLPKDEVDQMVQEAERFAKDDKEKRDAIDTKNQADSVVYQTEKQLKELGEKIPGEVKEKVEAKLQELKDKIGSGSTQEIKDAMAALNQEVMQIGQSLYNQPGAGGPGAGPSPGGEGASSGDSSSSKGGDGDDVIDADFTDSQ</sequence>
<name>HSP7F_ARATH</name>
<proteinExistence type="evidence at protein level"/>
<keyword id="KW-0067">ATP-binding</keyword>
<keyword id="KW-0143">Chaperone</keyword>
<keyword id="KW-0150">Chloroplast</keyword>
<keyword id="KW-0945">Host-virus interaction</keyword>
<keyword id="KW-0547">Nucleotide-binding</keyword>
<keyword id="KW-0934">Plastid</keyword>
<keyword id="KW-0653">Protein transport</keyword>
<keyword id="KW-1185">Reference proteome</keyword>
<keyword id="KW-0346">Stress response</keyword>
<keyword id="KW-0809">Transit peptide</keyword>
<keyword id="KW-0813">Transport</keyword>
<reference key="1">
    <citation type="journal article" date="1999" name="Nature">
        <title>Sequence and analysis of chromosome 4 of the plant Arabidopsis thaliana.</title>
        <authorList>
            <person name="Mayer K.F.X."/>
            <person name="Schueller C."/>
            <person name="Wambutt R."/>
            <person name="Murphy G."/>
            <person name="Volckaert G."/>
            <person name="Pohl T."/>
            <person name="Duesterhoeft A."/>
            <person name="Stiekema W."/>
            <person name="Entian K.-D."/>
            <person name="Terryn N."/>
            <person name="Harris B."/>
            <person name="Ansorge W."/>
            <person name="Brandt P."/>
            <person name="Grivell L.A."/>
            <person name="Rieger M."/>
            <person name="Weichselgartner M."/>
            <person name="de Simone V."/>
            <person name="Obermaier B."/>
            <person name="Mache R."/>
            <person name="Mueller M."/>
            <person name="Kreis M."/>
            <person name="Delseny M."/>
            <person name="Puigdomenech P."/>
            <person name="Watson M."/>
            <person name="Schmidtheini T."/>
            <person name="Reichert B."/>
            <person name="Portetelle D."/>
            <person name="Perez-Alonso M."/>
            <person name="Boutry M."/>
            <person name="Bancroft I."/>
            <person name="Vos P."/>
            <person name="Hoheisel J."/>
            <person name="Zimmermann W."/>
            <person name="Wedler H."/>
            <person name="Ridley P."/>
            <person name="Langham S.-A."/>
            <person name="McCullagh B."/>
            <person name="Bilham L."/>
            <person name="Robben J."/>
            <person name="van der Schueren J."/>
            <person name="Grymonprez B."/>
            <person name="Chuang Y.-J."/>
            <person name="Vandenbussche F."/>
            <person name="Braeken M."/>
            <person name="Weltjens I."/>
            <person name="Voet M."/>
            <person name="Bastiaens I."/>
            <person name="Aert R."/>
            <person name="Defoor E."/>
            <person name="Weitzenegger T."/>
            <person name="Bothe G."/>
            <person name="Ramsperger U."/>
            <person name="Hilbert H."/>
            <person name="Braun M."/>
            <person name="Holzer E."/>
            <person name="Brandt A."/>
            <person name="Peters S."/>
            <person name="van Staveren M."/>
            <person name="Dirkse W."/>
            <person name="Mooijman P."/>
            <person name="Klein Lankhorst R."/>
            <person name="Rose M."/>
            <person name="Hauf J."/>
            <person name="Koetter P."/>
            <person name="Berneiser S."/>
            <person name="Hempel S."/>
            <person name="Feldpausch M."/>
            <person name="Lamberth S."/>
            <person name="Van den Daele H."/>
            <person name="De Keyser A."/>
            <person name="Buysshaert C."/>
            <person name="Gielen J."/>
            <person name="Villarroel R."/>
            <person name="De Clercq R."/>
            <person name="van Montagu M."/>
            <person name="Rogers J."/>
            <person name="Cronin A."/>
            <person name="Quail M.A."/>
            <person name="Bray-Allen S."/>
            <person name="Clark L."/>
            <person name="Doggett J."/>
            <person name="Hall S."/>
            <person name="Kay M."/>
            <person name="Lennard N."/>
            <person name="McLay K."/>
            <person name="Mayes R."/>
            <person name="Pettett A."/>
            <person name="Rajandream M.A."/>
            <person name="Lyne M."/>
            <person name="Benes V."/>
            <person name="Rechmann S."/>
            <person name="Borkova D."/>
            <person name="Bloecker H."/>
            <person name="Scharfe M."/>
            <person name="Grimm M."/>
            <person name="Loehnert T.-H."/>
            <person name="Dose S."/>
            <person name="de Haan M."/>
            <person name="Maarse A.C."/>
            <person name="Schaefer M."/>
            <person name="Mueller-Auer S."/>
            <person name="Gabel C."/>
            <person name="Fuchs M."/>
            <person name="Fartmann B."/>
            <person name="Granderath K."/>
            <person name="Dauner D."/>
            <person name="Herzl A."/>
            <person name="Neumann S."/>
            <person name="Argiriou A."/>
            <person name="Vitale D."/>
            <person name="Liguori R."/>
            <person name="Piravandi E."/>
            <person name="Massenet O."/>
            <person name="Quigley F."/>
            <person name="Clabauld G."/>
            <person name="Muendlein A."/>
            <person name="Felber R."/>
            <person name="Schnabl S."/>
            <person name="Hiller R."/>
            <person name="Schmidt W."/>
            <person name="Lecharny A."/>
            <person name="Aubourg S."/>
            <person name="Chefdor F."/>
            <person name="Cooke R."/>
            <person name="Berger C."/>
            <person name="Monfort A."/>
            <person name="Casacuberta E."/>
            <person name="Gibbons T."/>
            <person name="Weber N."/>
            <person name="Vandenbol M."/>
            <person name="Bargues M."/>
            <person name="Terol J."/>
            <person name="Torres A."/>
            <person name="Perez-Perez A."/>
            <person name="Purnelle B."/>
            <person name="Bent E."/>
            <person name="Johnson S."/>
            <person name="Tacon D."/>
            <person name="Jesse T."/>
            <person name="Heijnen L."/>
            <person name="Schwarz S."/>
            <person name="Scholler P."/>
            <person name="Heber S."/>
            <person name="Francs P."/>
            <person name="Bielke C."/>
            <person name="Frishman D."/>
            <person name="Haase D."/>
            <person name="Lemcke K."/>
            <person name="Mewes H.-W."/>
            <person name="Stocker S."/>
            <person name="Zaccaria P."/>
            <person name="Bevan M."/>
            <person name="Wilson R.K."/>
            <person name="de la Bastide M."/>
            <person name="Habermann K."/>
            <person name="Parnell L."/>
            <person name="Dedhia N."/>
            <person name="Gnoj L."/>
            <person name="Schutz K."/>
            <person name="Huang E."/>
            <person name="Spiegel L."/>
            <person name="Sekhon M."/>
            <person name="Murray J."/>
            <person name="Sheet P."/>
            <person name="Cordes M."/>
            <person name="Abu-Threideh J."/>
            <person name="Stoneking T."/>
            <person name="Kalicki J."/>
            <person name="Graves T."/>
            <person name="Harmon G."/>
            <person name="Edwards J."/>
            <person name="Latreille P."/>
            <person name="Courtney L."/>
            <person name="Cloud J."/>
            <person name="Abbott A."/>
            <person name="Scott K."/>
            <person name="Johnson D."/>
            <person name="Minx P."/>
            <person name="Bentley D."/>
            <person name="Fulton B."/>
            <person name="Miller N."/>
            <person name="Greco T."/>
            <person name="Kemp K."/>
            <person name="Kramer J."/>
            <person name="Fulton L."/>
            <person name="Mardis E."/>
            <person name="Dante M."/>
            <person name="Pepin K."/>
            <person name="Hillier L.W."/>
            <person name="Nelson J."/>
            <person name="Spieth J."/>
            <person name="Ryan E."/>
            <person name="Andrews S."/>
            <person name="Geisel C."/>
            <person name="Layman D."/>
            <person name="Du H."/>
            <person name="Ali J."/>
            <person name="Berghoff A."/>
            <person name="Jones K."/>
            <person name="Drone K."/>
            <person name="Cotton M."/>
            <person name="Joshu C."/>
            <person name="Antonoiu B."/>
            <person name="Zidanic M."/>
            <person name="Strong C."/>
            <person name="Sun H."/>
            <person name="Lamar B."/>
            <person name="Yordan C."/>
            <person name="Ma P."/>
            <person name="Zhong J."/>
            <person name="Preston R."/>
            <person name="Vil D."/>
            <person name="Shekher M."/>
            <person name="Matero A."/>
            <person name="Shah R."/>
            <person name="Swaby I.K."/>
            <person name="O'Shaughnessy A."/>
            <person name="Rodriguez M."/>
            <person name="Hoffman J."/>
            <person name="Till S."/>
            <person name="Granat S."/>
            <person name="Shohdy N."/>
            <person name="Hasegawa A."/>
            <person name="Hameed A."/>
            <person name="Lodhi M."/>
            <person name="Johnson A."/>
            <person name="Chen E."/>
            <person name="Marra M.A."/>
            <person name="Martienssen R."/>
            <person name="McCombie W.R."/>
        </authorList>
    </citation>
    <scope>NUCLEOTIDE SEQUENCE [LARGE SCALE GENOMIC DNA]</scope>
    <source>
        <strain>cv. Columbia</strain>
    </source>
</reference>
<reference key="2">
    <citation type="journal article" date="2017" name="Plant J.">
        <title>Araport11: a complete reannotation of the Arabidopsis thaliana reference genome.</title>
        <authorList>
            <person name="Cheng C.Y."/>
            <person name="Krishnakumar V."/>
            <person name="Chan A.P."/>
            <person name="Thibaud-Nissen F."/>
            <person name="Schobel S."/>
            <person name="Town C.D."/>
        </authorList>
    </citation>
    <scope>GENOME REANNOTATION</scope>
    <source>
        <strain>cv. Columbia</strain>
    </source>
</reference>
<reference key="3">
    <citation type="journal article" date="2003" name="Science">
        <title>Empirical analysis of transcriptional activity in the Arabidopsis genome.</title>
        <authorList>
            <person name="Yamada K."/>
            <person name="Lim J."/>
            <person name="Dale J.M."/>
            <person name="Chen H."/>
            <person name="Shinn P."/>
            <person name="Palm C.J."/>
            <person name="Southwick A.M."/>
            <person name="Wu H.C."/>
            <person name="Kim C.J."/>
            <person name="Nguyen M."/>
            <person name="Pham P.K."/>
            <person name="Cheuk R.F."/>
            <person name="Karlin-Newmann G."/>
            <person name="Liu S.X."/>
            <person name="Lam B."/>
            <person name="Sakano H."/>
            <person name="Wu T."/>
            <person name="Yu G."/>
            <person name="Miranda M."/>
            <person name="Quach H.L."/>
            <person name="Tripp M."/>
            <person name="Chang C.H."/>
            <person name="Lee J.M."/>
            <person name="Toriumi M.J."/>
            <person name="Chan M.M."/>
            <person name="Tang C.C."/>
            <person name="Onodera C.S."/>
            <person name="Deng J.M."/>
            <person name="Akiyama K."/>
            <person name="Ansari Y."/>
            <person name="Arakawa T."/>
            <person name="Banh J."/>
            <person name="Banno F."/>
            <person name="Bowser L."/>
            <person name="Brooks S.Y."/>
            <person name="Carninci P."/>
            <person name="Chao Q."/>
            <person name="Choy N."/>
            <person name="Enju A."/>
            <person name="Goldsmith A.D."/>
            <person name="Gurjal M."/>
            <person name="Hansen N.F."/>
            <person name="Hayashizaki Y."/>
            <person name="Johnson-Hopson C."/>
            <person name="Hsuan V.W."/>
            <person name="Iida K."/>
            <person name="Karnes M."/>
            <person name="Khan S."/>
            <person name="Koesema E."/>
            <person name="Ishida J."/>
            <person name="Jiang P.X."/>
            <person name="Jones T."/>
            <person name="Kawai J."/>
            <person name="Kamiya A."/>
            <person name="Meyers C."/>
            <person name="Nakajima M."/>
            <person name="Narusaka M."/>
            <person name="Seki M."/>
            <person name="Sakurai T."/>
            <person name="Satou M."/>
            <person name="Tamse R."/>
            <person name="Vaysberg M."/>
            <person name="Wallender E.K."/>
            <person name="Wong C."/>
            <person name="Yamamura Y."/>
            <person name="Yuan S."/>
            <person name="Shinozaki K."/>
            <person name="Davis R.W."/>
            <person name="Theologis A."/>
            <person name="Ecker J.R."/>
        </authorList>
    </citation>
    <scope>NUCLEOTIDE SEQUENCE [LARGE SCALE MRNA]</scope>
    <source>
        <strain>cv. Columbia</strain>
    </source>
</reference>
<reference key="4">
    <citation type="journal article" date="2001" name="Cell Stress Chaperones">
        <title>Genomic analysis of the Hsp70 superfamily in Arabidopsis thaliana.</title>
        <authorList>
            <person name="Lin B.L."/>
            <person name="Wang J.S."/>
            <person name="Liu H.C."/>
            <person name="Chen R.W."/>
            <person name="Meyer Y."/>
            <person name="Barakat A."/>
            <person name="Delseny M."/>
        </authorList>
    </citation>
    <scope>GENE FAMILY</scope>
    <scope>NOMENCLATURE</scope>
</reference>
<reference key="5">
    <citation type="journal article" date="2001" name="Plant Physiol.">
        <title>Comprehensive expression profile analysis of the Arabidopsis Hsp70 gene family.</title>
        <authorList>
            <person name="Sung D.Y."/>
            <person name="Vierling E."/>
            <person name="Guy C.L."/>
        </authorList>
    </citation>
    <scope>DNAK GENE SUBFAMILY</scope>
</reference>
<reference key="6">
    <citation type="journal article" date="2008" name="Biosci. Biotechnol. Biochem.">
        <title>Alternative processing of Arabidopsis Hsp70 precursors during protein import into chloroplasts.</title>
        <authorList>
            <person name="Ratnayake R.M."/>
            <person name="Inoue H."/>
            <person name="Nonami H."/>
            <person name="Akita M."/>
        </authorList>
    </citation>
    <scope>SUBCELLULAR LOCATION</scope>
</reference>
<reference key="7">
    <citation type="journal article" date="2008" name="Plant Physiol.">
        <title>Arabidopsis stromal 70-kD heat shock proteins are essential for plant development and important for thermotolerance of germinating seeds.</title>
        <authorList>
            <person name="Su P.H."/>
            <person name="Li H.M."/>
        </authorList>
    </citation>
    <scope>FUNCTION</scope>
    <scope>DISRUPTION PHENOTYPE</scope>
</reference>
<reference key="8">
    <citation type="journal article" date="2010" name="Planta">
        <title>Arabidopsis stromal 70-kDa heat shock proteins are essential for chloroplast development.</title>
        <authorList>
            <person name="Latijnhouwers M."/>
            <person name="Xu X.M."/>
            <person name="Moeller S.G."/>
        </authorList>
    </citation>
    <scope>FUNCTION</scope>
    <scope>DISRUPTION PHENOTYPE</scope>
    <scope>SUBCELLULAR LOCATION</scope>
</reference>
<reference key="9">
    <citation type="journal article" date="2010" name="Plant Cell">
        <title>Stromal Hsp70 is important for protein translocation into pea and Arabidopsis chloroplasts.</title>
        <authorList>
            <person name="Su P.H."/>
            <person name="Li H.M."/>
        </authorList>
    </citation>
    <scope>FUNCTION</scope>
    <scope>DISRUPTION PHENOTYPE</scope>
</reference>
<reference key="10">
    <citation type="journal article" date="2010" name="Virology">
        <title>A plastid-targeted heat shock cognate 70kDa protein interacts with the Abutilon mosaic virus movement protein.</title>
        <authorList>
            <person name="Krenz B."/>
            <person name="Windeisen V."/>
            <person name="Wege C."/>
            <person name="Jeske H."/>
            <person name="Kleinow T."/>
        </authorList>
    </citation>
    <scope>INTERACTION WITH GEMINIVIRUS MP</scope>
</reference>
<evidence type="ECO:0000255" key="1"/>
<evidence type="ECO:0000256" key="2">
    <source>
        <dbReference type="SAM" id="MobiDB-lite"/>
    </source>
</evidence>
<evidence type="ECO:0000269" key="3">
    <source>
    </source>
</evidence>
<evidence type="ECO:0000269" key="4">
    <source>
    </source>
</evidence>
<evidence type="ECO:0000269" key="5">
    <source>
    </source>
</evidence>
<evidence type="ECO:0000269" key="6">
    <source>
    </source>
</evidence>
<evidence type="ECO:0000269" key="7">
    <source>
    </source>
</evidence>
<evidence type="ECO:0000305" key="8"/>